<sequence length="227" mass="24263">MEALKKIAGVTAAQYVTDGMTIGLGTGSTAYYFVEEIGRRVKQEGLQVVGVTTSSVTSKQAEGLGIPLKSIDDIDSIDLTVDGADEVDKDFNGIKGGGAALLMEKIVATPTKEYIWVVDASKMVEHLGAFKLPVEVVQYGADRLFRVFEKAGYKPSFRMKGDSRLVTDMQNYIIDLDLGCIKDPVAFGHLLDGTVGVVEHGLFNGMVDKVIVASKDGVTVLEAPKAG</sequence>
<comment type="function">
    <text evidence="1">Catalyzes the reversible conversion of ribose-5-phosphate to ribulose 5-phosphate.</text>
</comment>
<comment type="catalytic activity">
    <reaction evidence="1">
        <text>aldehydo-D-ribose 5-phosphate = D-ribulose 5-phosphate</text>
        <dbReference type="Rhea" id="RHEA:14657"/>
        <dbReference type="ChEBI" id="CHEBI:58121"/>
        <dbReference type="ChEBI" id="CHEBI:58273"/>
        <dbReference type="EC" id="5.3.1.6"/>
    </reaction>
</comment>
<comment type="pathway">
    <text evidence="1">Carbohydrate degradation; pentose phosphate pathway; D-ribose 5-phosphate from D-ribulose 5-phosphate (non-oxidative stage): step 1/1.</text>
</comment>
<comment type="subunit">
    <text evidence="1">Homodimer.</text>
</comment>
<comment type="similarity">
    <text evidence="1">Belongs to the ribose 5-phosphate isomerase family.</text>
</comment>
<feature type="chain" id="PRO_1000097700" description="Ribose-5-phosphate isomerase A">
    <location>
        <begin position="1"/>
        <end position="227"/>
    </location>
</feature>
<feature type="active site" description="Proton acceptor" evidence="1">
    <location>
        <position position="104"/>
    </location>
</feature>
<feature type="binding site" evidence="1">
    <location>
        <begin position="26"/>
        <end position="29"/>
    </location>
    <ligand>
        <name>substrate</name>
    </ligand>
</feature>
<feature type="binding site" evidence="1">
    <location>
        <begin position="82"/>
        <end position="85"/>
    </location>
    <ligand>
        <name>substrate</name>
    </ligand>
</feature>
<feature type="binding site" evidence="1">
    <location>
        <begin position="95"/>
        <end position="98"/>
    </location>
    <ligand>
        <name>substrate</name>
    </ligand>
</feature>
<feature type="binding site" evidence="1">
    <location>
        <position position="122"/>
    </location>
    <ligand>
        <name>substrate</name>
    </ligand>
</feature>
<organism>
    <name type="scientific">Streptococcus pyogenes serotype M49 (strain NZ131)</name>
    <dbReference type="NCBI Taxonomy" id="471876"/>
    <lineage>
        <taxon>Bacteria</taxon>
        <taxon>Bacillati</taxon>
        <taxon>Bacillota</taxon>
        <taxon>Bacilli</taxon>
        <taxon>Lactobacillales</taxon>
        <taxon>Streptococcaceae</taxon>
        <taxon>Streptococcus</taxon>
    </lineage>
</organism>
<accession>B5XL07</accession>
<dbReference type="EC" id="5.3.1.6" evidence="1"/>
<dbReference type="EMBL" id="CP000829">
    <property type="protein sequence ID" value="ACI61019.1"/>
    <property type="molecule type" value="Genomic_DNA"/>
</dbReference>
<dbReference type="SMR" id="B5XL07"/>
<dbReference type="KEGG" id="soz:Spy49_0704"/>
<dbReference type="HOGENOM" id="CLU_056590_1_0_9"/>
<dbReference type="UniPathway" id="UPA00115">
    <property type="reaction ID" value="UER00412"/>
</dbReference>
<dbReference type="Proteomes" id="UP000001039">
    <property type="component" value="Chromosome"/>
</dbReference>
<dbReference type="GO" id="GO:0004751">
    <property type="term" value="F:ribose-5-phosphate isomerase activity"/>
    <property type="evidence" value="ECO:0007669"/>
    <property type="project" value="UniProtKB-UniRule"/>
</dbReference>
<dbReference type="GO" id="GO:0009052">
    <property type="term" value="P:pentose-phosphate shunt, non-oxidative branch"/>
    <property type="evidence" value="ECO:0007669"/>
    <property type="project" value="UniProtKB-UniRule"/>
</dbReference>
<dbReference type="CDD" id="cd01398">
    <property type="entry name" value="RPI_A"/>
    <property type="match status" value="1"/>
</dbReference>
<dbReference type="FunFam" id="3.40.50.1360:FF:000001">
    <property type="entry name" value="Ribose-5-phosphate isomerase A"/>
    <property type="match status" value="1"/>
</dbReference>
<dbReference type="Gene3D" id="3.30.70.260">
    <property type="match status" value="1"/>
</dbReference>
<dbReference type="Gene3D" id="3.40.50.1360">
    <property type="match status" value="1"/>
</dbReference>
<dbReference type="HAMAP" id="MF_00170">
    <property type="entry name" value="Rib_5P_isom_A"/>
    <property type="match status" value="1"/>
</dbReference>
<dbReference type="InterPro" id="IPR037171">
    <property type="entry name" value="NagB/RpiA_transferase-like"/>
</dbReference>
<dbReference type="InterPro" id="IPR050262">
    <property type="entry name" value="Ribose-5P_isomerase"/>
</dbReference>
<dbReference type="InterPro" id="IPR020672">
    <property type="entry name" value="Ribose5P_isomerase_typA_subgr"/>
</dbReference>
<dbReference type="InterPro" id="IPR004788">
    <property type="entry name" value="Ribose5P_isomerase_type_A"/>
</dbReference>
<dbReference type="NCBIfam" id="NF001924">
    <property type="entry name" value="PRK00702.1"/>
    <property type="match status" value="1"/>
</dbReference>
<dbReference type="NCBIfam" id="TIGR00021">
    <property type="entry name" value="rpiA"/>
    <property type="match status" value="1"/>
</dbReference>
<dbReference type="PANTHER" id="PTHR43748">
    <property type="entry name" value="RIBOSE-5-PHOSPHATE ISOMERASE 3, CHLOROPLASTIC-RELATED"/>
    <property type="match status" value="1"/>
</dbReference>
<dbReference type="PANTHER" id="PTHR43748:SF3">
    <property type="entry name" value="RIBOSE-5-PHOSPHATE ISOMERASE 3, CHLOROPLASTIC-RELATED"/>
    <property type="match status" value="1"/>
</dbReference>
<dbReference type="Pfam" id="PF06026">
    <property type="entry name" value="Rib_5-P_isom_A"/>
    <property type="match status" value="1"/>
</dbReference>
<dbReference type="SUPFAM" id="SSF75445">
    <property type="entry name" value="D-ribose-5-phosphate isomerase (RpiA), lid domain"/>
    <property type="match status" value="1"/>
</dbReference>
<dbReference type="SUPFAM" id="SSF100950">
    <property type="entry name" value="NagB/RpiA/CoA transferase-like"/>
    <property type="match status" value="1"/>
</dbReference>
<proteinExistence type="inferred from homology"/>
<name>RPIA_STRPZ</name>
<keyword id="KW-0413">Isomerase</keyword>
<protein>
    <recommendedName>
        <fullName evidence="1">Ribose-5-phosphate isomerase A</fullName>
        <ecNumber evidence="1">5.3.1.6</ecNumber>
    </recommendedName>
    <alternativeName>
        <fullName evidence="1">Phosphoriboisomerase A</fullName>
        <shortName evidence="1">PRI</shortName>
    </alternativeName>
</protein>
<evidence type="ECO:0000255" key="1">
    <source>
        <dbReference type="HAMAP-Rule" id="MF_00170"/>
    </source>
</evidence>
<reference key="1">
    <citation type="journal article" date="2008" name="J. Bacteriol.">
        <title>Genome sequence of a nephritogenic and highly transformable M49 strain of Streptococcus pyogenes.</title>
        <authorList>
            <person name="McShan W.M."/>
            <person name="Ferretti J.J."/>
            <person name="Karasawa T."/>
            <person name="Suvorov A.N."/>
            <person name="Lin S."/>
            <person name="Qin B."/>
            <person name="Jia H."/>
            <person name="Kenton S."/>
            <person name="Najar F."/>
            <person name="Wu H."/>
            <person name="Scott J."/>
            <person name="Roe B.A."/>
            <person name="Savic D.J."/>
        </authorList>
    </citation>
    <scope>NUCLEOTIDE SEQUENCE [LARGE SCALE GENOMIC DNA]</scope>
    <source>
        <strain>NZ131</strain>
    </source>
</reference>
<gene>
    <name evidence="1" type="primary">rpiA</name>
    <name type="ordered locus">Spy49_0704</name>
</gene>